<evidence type="ECO:0000255" key="1">
    <source>
        <dbReference type="HAMAP-Rule" id="MF_00385"/>
    </source>
</evidence>
<evidence type="ECO:0000256" key="2">
    <source>
        <dbReference type="SAM" id="MobiDB-lite"/>
    </source>
</evidence>
<evidence type="ECO:0000305" key="3"/>
<protein>
    <recommendedName>
        <fullName evidence="1">Small ribosomal subunit protein bS16</fullName>
    </recommendedName>
    <alternativeName>
        <fullName evidence="3">30S ribosomal protein S16</fullName>
    </alternativeName>
</protein>
<name>RS16_SYNS3</name>
<dbReference type="EMBL" id="CP000435">
    <property type="protein sequence ID" value="ABI46492.1"/>
    <property type="molecule type" value="Genomic_DNA"/>
</dbReference>
<dbReference type="RefSeq" id="WP_011618708.1">
    <property type="nucleotide sequence ID" value="NC_008319.1"/>
</dbReference>
<dbReference type="SMR" id="Q0IC41"/>
<dbReference type="STRING" id="64471.sync_0767"/>
<dbReference type="KEGG" id="syg:sync_0767"/>
<dbReference type="eggNOG" id="COG0228">
    <property type="taxonomic scope" value="Bacteria"/>
</dbReference>
<dbReference type="HOGENOM" id="CLU_100590_3_2_3"/>
<dbReference type="OrthoDB" id="9807878at2"/>
<dbReference type="Proteomes" id="UP000001961">
    <property type="component" value="Chromosome"/>
</dbReference>
<dbReference type="GO" id="GO:0005737">
    <property type="term" value="C:cytoplasm"/>
    <property type="evidence" value="ECO:0007669"/>
    <property type="project" value="UniProtKB-ARBA"/>
</dbReference>
<dbReference type="GO" id="GO:0015935">
    <property type="term" value="C:small ribosomal subunit"/>
    <property type="evidence" value="ECO:0007669"/>
    <property type="project" value="TreeGrafter"/>
</dbReference>
<dbReference type="GO" id="GO:0003735">
    <property type="term" value="F:structural constituent of ribosome"/>
    <property type="evidence" value="ECO:0007669"/>
    <property type="project" value="InterPro"/>
</dbReference>
<dbReference type="GO" id="GO:0006412">
    <property type="term" value="P:translation"/>
    <property type="evidence" value="ECO:0007669"/>
    <property type="project" value="UniProtKB-UniRule"/>
</dbReference>
<dbReference type="Gene3D" id="3.30.1320.10">
    <property type="match status" value="1"/>
</dbReference>
<dbReference type="HAMAP" id="MF_00385">
    <property type="entry name" value="Ribosomal_bS16"/>
    <property type="match status" value="1"/>
</dbReference>
<dbReference type="InterPro" id="IPR000307">
    <property type="entry name" value="Ribosomal_bS16"/>
</dbReference>
<dbReference type="InterPro" id="IPR020592">
    <property type="entry name" value="Ribosomal_bS16_CS"/>
</dbReference>
<dbReference type="InterPro" id="IPR023803">
    <property type="entry name" value="Ribosomal_bS16_dom_sf"/>
</dbReference>
<dbReference type="NCBIfam" id="TIGR00002">
    <property type="entry name" value="S16"/>
    <property type="match status" value="1"/>
</dbReference>
<dbReference type="PANTHER" id="PTHR12919">
    <property type="entry name" value="30S RIBOSOMAL PROTEIN S16"/>
    <property type="match status" value="1"/>
</dbReference>
<dbReference type="PANTHER" id="PTHR12919:SF20">
    <property type="entry name" value="SMALL RIBOSOMAL SUBUNIT PROTEIN BS16M"/>
    <property type="match status" value="1"/>
</dbReference>
<dbReference type="Pfam" id="PF00886">
    <property type="entry name" value="Ribosomal_S16"/>
    <property type="match status" value="1"/>
</dbReference>
<dbReference type="SUPFAM" id="SSF54565">
    <property type="entry name" value="Ribosomal protein S16"/>
    <property type="match status" value="1"/>
</dbReference>
<dbReference type="PROSITE" id="PS00732">
    <property type="entry name" value="RIBOSOMAL_S16"/>
    <property type="match status" value="1"/>
</dbReference>
<reference key="1">
    <citation type="journal article" date="2006" name="Proc. Natl. Acad. Sci. U.S.A.">
        <title>Genome sequence of Synechococcus CC9311: insights into adaptation to a coastal environment.</title>
        <authorList>
            <person name="Palenik B."/>
            <person name="Ren Q."/>
            <person name="Dupont C.L."/>
            <person name="Myers G.S."/>
            <person name="Heidelberg J.F."/>
            <person name="Badger J.H."/>
            <person name="Madupu R."/>
            <person name="Nelson W.C."/>
            <person name="Brinkac L.M."/>
            <person name="Dodson R.J."/>
            <person name="Durkin A.S."/>
            <person name="Daugherty S.C."/>
            <person name="Sullivan S.A."/>
            <person name="Khouri H."/>
            <person name="Mohamoud Y."/>
            <person name="Halpin R."/>
            <person name="Paulsen I.T."/>
        </authorList>
    </citation>
    <scope>NUCLEOTIDE SEQUENCE [LARGE SCALE GENOMIC DNA]</scope>
    <source>
        <strain>CC9311</strain>
    </source>
</reference>
<proteinExistence type="inferred from homology"/>
<comment type="similarity">
    <text evidence="1">Belongs to the bacterial ribosomal protein bS16 family.</text>
</comment>
<keyword id="KW-1185">Reference proteome</keyword>
<keyword id="KW-0687">Ribonucleoprotein</keyword>
<keyword id="KW-0689">Ribosomal protein</keyword>
<feature type="chain" id="PRO_1000049369" description="Small ribosomal subunit protein bS16">
    <location>
        <begin position="1"/>
        <end position="128"/>
    </location>
</feature>
<feature type="region of interest" description="Disordered" evidence="2">
    <location>
        <begin position="107"/>
        <end position="128"/>
    </location>
</feature>
<feature type="compositionally biased region" description="Acidic residues" evidence="2">
    <location>
        <begin position="117"/>
        <end position="128"/>
    </location>
</feature>
<accession>Q0IC41</accession>
<gene>
    <name evidence="1" type="primary">rpsP</name>
    <name evidence="1" type="synonym">rps16</name>
    <name type="ordered locus">sync_0767</name>
</gene>
<organism>
    <name type="scientific">Synechococcus sp. (strain CC9311)</name>
    <dbReference type="NCBI Taxonomy" id="64471"/>
    <lineage>
        <taxon>Bacteria</taxon>
        <taxon>Bacillati</taxon>
        <taxon>Cyanobacteriota</taxon>
        <taxon>Cyanophyceae</taxon>
        <taxon>Synechococcales</taxon>
        <taxon>Synechococcaceae</taxon>
        <taxon>Synechococcus</taxon>
    </lineage>
</organism>
<sequence length="128" mass="13974">MIKLRLKRFGKKREASFRLVACNSTSRRDGRPLQELGFYNPRTKETRLDAEALRVRLSQGAQPTDAVRFLLEKGGLLEKTVRPAETIGKLKQAAAREAAVKQAAKDAAEAKAAAANESDDSGTDSTES</sequence>